<gene>
    <name evidence="3" type="primary">ndk</name>
    <name type="ordered locus">SynWH7803_2388</name>
</gene>
<sequence length="152" mass="16616">MASERTFIAIKPDGVQRGLIGEILGRFERKGFKLVGLKQLTPSRELAEQHYGVHKERPFFAGLVDFITSGPVVAMVWEGDGVIASARKLIGATKPLEAEPGTIRGDLAINIGRNVIHGSDAPETAQFEIGLWFQASELSDWTPSDQGWRTEG</sequence>
<name>NDK_SYNPW</name>
<accession>A5GPE9</accession>
<feature type="chain" id="PRO_1000026306" description="Nucleoside diphosphate kinase">
    <location>
        <begin position="1"/>
        <end position="152"/>
    </location>
</feature>
<feature type="active site" description="Pros-phosphohistidine intermediate" evidence="3">
    <location>
        <position position="117"/>
    </location>
</feature>
<feature type="binding site" evidence="3">
    <location>
        <position position="11"/>
    </location>
    <ligand>
        <name>ATP</name>
        <dbReference type="ChEBI" id="CHEBI:30616"/>
    </ligand>
</feature>
<feature type="binding site" evidence="3">
    <location>
        <position position="59"/>
    </location>
    <ligand>
        <name>ATP</name>
        <dbReference type="ChEBI" id="CHEBI:30616"/>
    </ligand>
</feature>
<feature type="binding site" evidence="3">
    <location>
        <position position="87"/>
    </location>
    <ligand>
        <name>ATP</name>
        <dbReference type="ChEBI" id="CHEBI:30616"/>
    </ligand>
</feature>
<feature type="binding site" evidence="3">
    <location>
        <position position="93"/>
    </location>
    <ligand>
        <name>ATP</name>
        <dbReference type="ChEBI" id="CHEBI:30616"/>
    </ligand>
</feature>
<feature type="binding site" evidence="3">
    <location>
        <position position="104"/>
    </location>
    <ligand>
        <name>ATP</name>
        <dbReference type="ChEBI" id="CHEBI:30616"/>
    </ligand>
</feature>
<feature type="binding site" evidence="3">
    <location>
        <position position="114"/>
    </location>
    <ligand>
        <name>ATP</name>
        <dbReference type="ChEBI" id="CHEBI:30616"/>
    </ligand>
</feature>
<dbReference type="EC" id="2.7.4.6" evidence="3"/>
<dbReference type="EMBL" id="CT971583">
    <property type="protein sequence ID" value="CAK24814.1"/>
    <property type="molecule type" value="Genomic_DNA"/>
</dbReference>
<dbReference type="SMR" id="A5GPE9"/>
<dbReference type="STRING" id="32051.SynWH7803_2388"/>
<dbReference type="KEGG" id="syx:SynWH7803_2388"/>
<dbReference type="eggNOG" id="COG0105">
    <property type="taxonomic scope" value="Bacteria"/>
</dbReference>
<dbReference type="HOGENOM" id="CLU_060216_6_3_3"/>
<dbReference type="OrthoDB" id="9801161at2"/>
<dbReference type="Proteomes" id="UP000001566">
    <property type="component" value="Chromosome"/>
</dbReference>
<dbReference type="GO" id="GO:0005737">
    <property type="term" value="C:cytoplasm"/>
    <property type="evidence" value="ECO:0007669"/>
    <property type="project" value="UniProtKB-SubCell"/>
</dbReference>
<dbReference type="GO" id="GO:0005524">
    <property type="term" value="F:ATP binding"/>
    <property type="evidence" value="ECO:0007669"/>
    <property type="project" value="UniProtKB-UniRule"/>
</dbReference>
<dbReference type="GO" id="GO:0046872">
    <property type="term" value="F:metal ion binding"/>
    <property type="evidence" value="ECO:0007669"/>
    <property type="project" value="UniProtKB-KW"/>
</dbReference>
<dbReference type="GO" id="GO:0004550">
    <property type="term" value="F:nucleoside diphosphate kinase activity"/>
    <property type="evidence" value="ECO:0007669"/>
    <property type="project" value="UniProtKB-UniRule"/>
</dbReference>
<dbReference type="GO" id="GO:0006241">
    <property type="term" value="P:CTP biosynthetic process"/>
    <property type="evidence" value="ECO:0007669"/>
    <property type="project" value="UniProtKB-UniRule"/>
</dbReference>
<dbReference type="GO" id="GO:0006183">
    <property type="term" value="P:GTP biosynthetic process"/>
    <property type="evidence" value="ECO:0007669"/>
    <property type="project" value="UniProtKB-UniRule"/>
</dbReference>
<dbReference type="GO" id="GO:0006228">
    <property type="term" value="P:UTP biosynthetic process"/>
    <property type="evidence" value="ECO:0007669"/>
    <property type="project" value="UniProtKB-UniRule"/>
</dbReference>
<dbReference type="CDD" id="cd04413">
    <property type="entry name" value="NDPk_I"/>
    <property type="match status" value="1"/>
</dbReference>
<dbReference type="FunFam" id="3.30.70.141:FF:000002">
    <property type="entry name" value="Nucleoside diphosphate kinase"/>
    <property type="match status" value="1"/>
</dbReference>
<dbReference type="Gene3D" id="3.30.70.141">
    <property type="entry name" value="Nucleoside diphosphate kinase-like domain"/>
    <property type="match status" value="1"/>
</dbReference>
<dbReference type="HAMAP" id="MF_00451">
    <property type="entry name" value="NDP_kinase"/>
    <property type="match status" value="1"/>
</dbReference>
<dbReference type="InterPro" id="IPR034907">
    <property type="entry name" value="NDK-like_dom"/>
</dbReference>
<dbReference type="InterPro" id="IPR036850">
    <property type="entry name" value="NDK-like_dom_sf"/>
</dbReference>
<dbReference type="InterPro" id="IPR001564">
    <property type="entry name" value="Nucleoside_diP_kinase"/>
</dbReference>
<dbReference type="InterPro" id="IPR023005">
    <property type="entry name" value="Nucleoside_diP_kinase_AS"/>
</dbReference>
<dbReference type="NCBIfam" id="NF001908">
    <property type="entry name" value="PRK00668.1"/>
    <property type="match status" value="1"/>
</dbReference>
<dbReference type="PANTHER" id="PTHR11349">
    <property type="entry name" value="NUCLEOSIDE DIPHOSPHATE KINASE"/>
    <property type="match status" value="1"/>
</dbReference>
<dbReference type="Pfam" id="PF00334">
    <property type="entry name" value="NDK"/>
    <property type="match status" value="1"/>
</dbReference>
<dbReference type="PRINTS" id="PR01243">
    <property type="entry name" value="NUCDPKINASE"/>
</dbReference>
<dbReference type="SMART" id="SM00562">
    <property type="entry name" value="NDK"/>
    <property type="match status" value="1"/>
</dbReference>
<dbReference type="SUPFAM" id="SSF54919">
    <property type="entry name" value="Nucleoside diphosphate kinase, NDK"/>
    <property type="match status" value="1"/>
</dbReference>
<dbReference type="PROSITE" id="PS00469">
    <property type="entry name" value="NDPK"/>
    <property type="match status" value="1"/>
</dbReference>
<dbReference type="PROSITE" id="PS51374">
    <property type="entry name" value="NDPK_LIKE"/>
    <property type="match status" value="1"/>
</dbReference>
<proteinExistence type="inferred from homology"/>
<protein>
    <recommendedName>
        <fullName evidence="3">Nucleoside diphosphate kinase</fullName>
        <shortName evidence="3">NDK</shortName>
        <shortName evidence="3">NDP kinase</shortName>
        <ecNumber evidence="3">2.7.4.6</ecNumber>
    </recommendedName>
    <alternativeName>
        <fullName evidence="3">Nucleoside-2-P kinase</fullName>
    </alternativeName>
</protein>
<reference key="1">
    <citation type="submission" date="2006-05" db="EMBL/GenBank/DDBJ databases">
        <authorList>
            <consortium name="Genoscope"/>
        </authorList>
    </citation>
    <scope>NUCLEOTIDE SEQUENCE [LARGE SCALE GENOMIC DNA]</scope>
    <source>
        <strain>WH7803</strain>
    </source>
</reference>
<evidence type="ECO:0000250" key="1">
    <source>
        <dbReference type="UniProtKB" id="Q9KNM4"/>
    </source>
</evidence>
<evidence type="ECO:0000250" key="2">
    <source>
        <dbReference type="UniProtKB" id="Q9KTX4"/>
    </source>
</evidence>
<evidence type="ECO:0000255" key="3">
    <source>
        <dbReference type="HAMAP-Rule" id="MF_00451"/>
    </source>
</evidence>
<comment type="function">
    <text evidence="3">Major role in the synthesis of nucleoside triphosphates other than ATP. The ATP gamma phosphate is transferred to the NDP beta phosphate via a ping-pong mechanism, using a phosphorylated active-site intermediate.</text>
</comment>
<comment type="function">
    <text evidence="1">(Microbial infection) Catalyzes the phosphorylation of dZDP to dZTP, when the bacterium is infected by a phage that produces the substrate for the synthesis of dZTP (2- amino-2'-deoxyadenosine 5'-triphosphate), which is then used by the phage as a DNA polymerase substrate.</text>
</comment>
<comment type="catalytic activity">
    <reaction evidence="2">
        <text>dZDP + ATP = dZTP + ADP</text>
        <dbReference type="Rhea" id="RHEA:67644"/>
        <dbReference type="ChEBI" id="CHEBI:30616"/>
        <dbReference type="ChEBI" id="CHEBI:172929"/>
        <dbReference type="ChEBI" id="CHEBI:172931"/>
        <dbReference type="ChEBI" id="CHEBI:456216"/>
    </reaction>
</comment>
<comment type="catalytic activity">
    <reaction evidence="3">
        <text>a 2'-deoxyribonucleoside 5'-diphosphate + ATP = a 2'-deoxyribonucleoside 5'-triphosphate + ADP</text>
        <dbReference type="Rhea" id="RHEA:44640"/>
        <dbReference type="ChEBI" id="CHEBI:30616"/>
        <dbReference type="ChEBI" id="CHEBI:61560"/>
        <dbReference type="ChEBI" id="CHEBI:73316"/>
        <dbReference type="ChEBI" id="CHEBI:456216"/>
        <dbReference type="EC" id="2.7.4.6"/>
    </reaction>
</comment>
<comment type="catalytic activity">
    <reaction evidence="3">
        <text>a ribonucleoside 5'-diphosphate + ATP = a ribonucleoside 5'-triphosphate + ADP</text>
        <dbReference type="Rhea" id="RHEA:18113"/>
        <dbReference type="ChEBI" id="CHEBI:30616"/>
        <dbReference type="ChEBI" id="CHEBI:57930"/>
        <dbReference type="ChEBI" id="CHEBI:61557"/>
        <dbReference type="ChEBI" id="CHEBI:456216"/>
        <dbReference type="EC" id="2.7.4.6"/>
    </reaction>
</comment>
<comment type="cofactor">
    <cofactor evidence="3">
        <name>Mg(2+)</name>
        <dbReference type="ChEBI" id="CHEBI:18420"/>
    </cofactor>
</comment>
<comment type="pathway">
    <text evidence="2">Purine metabolism.</text>
</comment>
<comment type="subunit">
    <text evidence="3">Homotetramer.</text>
</comment>
<comment type="subcellular location">
    <subcellularLocation>
        <location evidence="3">Cytoplasm</location>
    </subcellularLocation>
</comment>
<comment type="similarity">
    <text evidence="3">Belongs to the NDK family.</text>
</comment>
<keyword id="KW-0067">ATP-binding</keyword>
<keyword id="KW-0963">Cytoplasm</keyword>
<keyword id="KW-0418">Kinase</keyword>
<keyword id="KW-0460">Magnesium</keyword>
<keyword id="KW-0479">Metal-binding</keyword>
<keyword id="KW-0546">Nucleotide metabolism</keyword>
<keyword id="KW-0547">Nucleotide-binding</keyword>
<keyword id="KW-0597">Phosphoprotein</keyword>
<keyword id="KW-1185">Reference proteome</keyword>
<keyword id="KW-0808">Transferase</keyword>
<organism>
    <name type="scientific">Synechococcus sp. (strain WH7803)</name>
    <dbReference type="NCBI Taxonomy" id="32051"/>
    <lineage>
        <taxon>Bacteria</taxon>
        <taxon>Bacillati</taxon>
        <taxon>Cyanobacteriota</taxon>
        <taxon>Cyanophyceae</taxon>
        <taxon>Synechococcales</taxon>
        <taxon>Synechococcaceae</taxon>
        <taxon>Synechococcus</taxon>
    </lineage>
</organism>